<comment type="function">
    <text evidence="1">Catalyzes the reversible formation of acyl-phosphate (acyl-PO(4)) from acyl-[acyl-carrier-protein] (acyl-ACP). This enzyme utilizes acyl-ACP as fatty acyl donor, but not acyl-CoA.</text>
</comment>
<comment type="catalytic activity">
    <reaction evidence="1">
        <text>a fatty acyl-[ACP] + phosphate = an acyl phosphate + holo-[ACP]</text>
        <dbReference type="Rhea" id="RHEA:42292"/>
        <dbReference type="Rhea" id="RHEA-COMP:9685"/>
        <dbReference type="Rhea" id="RHEA-COMP:14125"/>
        <dbReference type="ChEBI" id="CHEBI:43474"/>
        <dbReference type="ChEBI" id="CHEBI:59918"/>
        <dbReference type="ChEBI" id="CHEBI:64479"/>
        <dbReference type="ChEBI" id="CHEBI:138651"/>
        <dbReference type="EC" id="2.3.1.274"/>
    </reaction>
</comment>
<comment type="pathway">
    <text evidence="1">Lipid metabolism; phospholipid metabolism.</text>
</comment>
<comment type="subunit">
    <text evidence="1">Homodimer. Probably interacts with PlsY.</text>
</comment>
<comment type="subcellular location">
    <subcellularLocation>
        <location evidence="1">Cytoplasm</location>
    </subcellularLocation>
    <text evidence="1">Associated with the membrane possibly through PlsY.</text>
</comment>
<comment type="similarity">
    <text evidence="1">Belongs to the PlsX family.</text>
</comment>
<sequence length="341" mass="37253">MQQLTIAIDAMGGDFGPQVTVPAAVQALSQFPELKITVIGDRDAISTQLTHLNYIPNSRFSIVHSESVIGNNTQPSKALRHSRGSSMRMAIDMVANKEADACISAGNTGALMGLSRFTLKLLPGVERPALISPLPTKNNQRTWMLDLGANVSCDAETLFQFAVMGSELAEQTLKRKAKVALLNIGEEEIKGNDQIKRCAEMLNQCQDIEFIGYIEGDKLYQGIADVVVCDGFVGNVCLKTSEGVAHLFLDQLKSHLITSKFKQFIAKWLFGDVISCLKGLNPDQYNGASLIGLRGIVVKSHGSADVSAFNNAIKEAVHEVKRQIPNRISDRLEAVLLERHY</sequence>
<accession>Q5E408</accession>
<protein>
    <recommendedName>
        <fullName evidence="1">Phosphate acyltransferase</fullName>
        <ecNumber evidence="1">2.3.1.274</ecNumber>
    </recommendedName>
    <alternativeName>
        <fullName evidence="1">Acyl-ACP phosphotransacylase</fullName>
    </alternativeName>
    <alternativeName>
        <fullName evidence="1">Acyl-[acyl-carrier-protein]--phosphate acyltransferase</fullName>
    </alternativeName>
    <alternativeName>
        <fullName evidence="1">Phosphate-acyl-ACP acyltransferase</fullName>
    </alternativeName>
</protein>
<proteinExistence type="inferred from homology"/>
<organism>
    <name type="scientific">Aliivibrio fischeri (strain ATCC 700601 / ES114)</name>
    <name type="common">Vibrio fischeri</name>
    <dbReference type="NCBI Taxonomy" id="312309"/>
    <lineage>
        <taxon>Bacteria</taxon>
        <taxon>Pseudomonadati</taxon>
        <taxon>Pseudomonadota</taxon>
        <taxon>Gammaproteobacteria</taxon>
        <taxon>Vibrionales</taxon>
        <taxon>Vibrionaceae</taxon>
        <taxon>Aliivibrio</taxon>
    </lineage>
</organism>
<dbReference type="EC" id="2.3.1.274" evidence="1"/>
<dbReference type="EMBL" id="CP000020">
    <property type="protein sequence ID" value="AAW86238.1"/>
    <property type="molecule type" value="Genomic_DNA"/>
</dbReference>
<dbReference type="RefSeq" id="WP_005420134.1">
    <property type="nucleotide sequence ID" value="NZ_CAWLES010000001.1"/>
</dbReference>
<dbReference type="RefSeq" id="YP_205126.1">
    <property type="nucleotide sequence ID" value="NC_006840.2"/>
</dbReference>
<dbReference type="SMR" id="Q5E408"/>
<dbReference type="STRING" id="312309.VF_1743"/>
<dbReference type="EnsemblBacteria" id="AAW86238">
    <property type="protein sequence ID" value="AAW86238"/>
    <property type="gene ID" value="VF_1743"/>
</dbReference>
<dbReference type="GeneID" id="54164442"/>
<dbReference type="KEGG" id="vfi:VF_1743"/>
<dbReference type="PATRIC" id="fig|312309.11.peg.1769"/>
<dbReference type="eggNOG" id="COG0416">
    <property type="taxonomic scope" value="Bacteria"/>
</dbReference>
<dbReference type="HOGENOM" id="CLU_039379_1_0_6"/>
<dbReference type="OrthoDB" id="9806408at2"/>
<dbReference type="UniPathway" id="UPA00085"/>
<dbReference type="Proteomes" id="UP000000537">
    <property type="component" value="Chromosome I"/>
</dbReference>
<dbReference type="GO" id="GO:0005737">
    <property type="term" value="C:cytoplasm"/>
    <property type="evidence" value="ECO:0007669"/>
    <property type="project" value="UniProtKB-SubCell"/>
</dbReference>
<dbReference type="GO" id="GO:0043811">
    <property type="term" value="F:phosphate:acyl-[acyl carrier protein] acyltransferase activity"/>
    <property type="evidence" value="ECO:0007669"/>
    <property type="project" value="UniProtKB-UniRule"/>
</dbReference>
<dbReference type="GO" id="GO:0006633">
    <property type="term" value="P:fatty acid biosynthetic process"/>
    <property type="evidence" value="ECO:0007669"/>
    <property type="project" value="UniProtKB-UniRule"/>
</dbReference>
<dbReference type="GO" id="GO:0008654">
    <property type="term" value="P:phospholipid biosynthetic process"/>
    <property type="evidence" value="ECO:0007669"/>
    <property type="project" value="UniProtKB-KW"/>
</dbReference>
<dbReference type="Gene3D" id="3.40.718.10">
    <property type="entry name" value="Isopropylmalate Dehydrogenase"/>
    <property type="match status" value="1"/>
</dbReference>
<dbReference type="HAMAP" id="MF_00019">
    <property type="entry name" value="PlsX"/>
    <property type="match status" value="1"/>
</dbReference>
<dbReference type="InterPro" id="IPR003664">
    <property type="entry name" value="FA_synthesis"/>
</dbReference>
<dbReference type="InterPro" id="IPR012281">
    <property type="entry name" value="Phospholipid_synth_PlsX-like"/>
</dbReference>
<dbReference type="NCBIfam" id="TIGR00182">
    <property type="entry name" value="plsX"/>
    <property type="match status" value="1"/>
</dbReference>
<dbReference type="PANTHER" id="PTHR30100">
    <property type="entry name" value="FATTY ACID/PHOSPHOLIPID SYNTHESIS PROTEIN PLSX"/>
    <property type="match status" value="1"/>
</dbReference>
<dbReference type="PANTHER" id="PTHR30100:SF1">
    <property type="entry name" value="PHOSPHATE ACYLTRANSFERASE"/>
    <property type="match status" value="1"/>
</dbReference>
<dbReference type="Pfam" id="PF02504">
    <property type="entry name" value="FA_synthesis"/>
    <property type="match status" value="1"/>
</dbReference>
<dbReference type="PIRSF" id="PIRSF002465">
    <property type="entry name" value="Phsphlp_syn_PlsX"/>
    <property type="match status" value="1"/>
</dbReference>
<dbReference type="SUPFAM" id="SSF53659">
    <property type="entry name" value="Isocitrate/Isopropylmalate dehydrogenase-like"/>
    <property type="match status" value="1"/>
</dbReference>
<keyword id="KW-0963">Cytoplasm</keyword>
<keyword id="KW-0444">Lipid biosynthesis</keyword>
<keyword id="KW-0443">Lipid metabolism</keyword>
<keyword id="KW-0594">Phospholipid biosynthesis</keyword>
<keyword id="KW-1208">Phospholipid metabolism</keyword>
<keyword id="KW-1185">Reference proteome</keyword>
<keyword id="KW-0808">Transferase</keyword>
<gene>
    <name evidence="1" type="primary">plsX</name>
    <name type="ordered locus">VF_1743</name>
</gene>
<evidence type="ECO:0000255" key="1">
    <source>
        <dbReference type="HAMAP-Rule" id="MF_00019"/>
    </source>
</evidence>
<reference key="1">
    <citation type="journal article" date="2005" name="Proc. Natl. Acad. Sci. U.S.A.">
        <title>Complete genome sequence of Vibrio fischeri: a symbiotic bacterium with pathogenic congeners.</title>
        <authorList>
            <person name="Ruby E.G."/>
            <person name="Urbanowski M."/>
            <person name="Campbell J."/>
            <person name="Dunn A."/>
            <person name="Faini M."/>
            <person name="Gunsalus R."/>
            <person name="Lostroh P."/>
            <person name="Lupp C."/>
            <person name="McCann J."/>
            <person name="Millikan D."/>
            <person name="Schaefer A."/>
            <person name="Stabb E."/>
            <person name="Stevens A."/>
            <person name="Visick K."/>
            <person name="Whistler C."/>
            <person name="Greenberg E.P."/>
        </authorList>
    </citation>
    <scope>NUCLEOTIDE SEQUENCE [LARGE SCALE GENOMIC DNA]</scope>
    <source>
        <strain>ATCC 700601 / ES114</strain>
    </source>
</reference>
<feature type="chain" id="PRO_0000189962" description="Phosphate acyltransferase">
    <location>
        <begin position="1"/>
        <end position="341"/>
    </location>
</feature>
<name>PLSX_ALIF1</name>